<gene>
    <name evidence="1" type="primary">cdd</name>
    <name type="ordered locus">EC55989_2393</name>
</gene>
<evidence type="ECO:0000255" key="1">
    <source>
        <dbReference type="HAMAP-Rule" id="MF_01558"/>
    </source>
</evidence>
<evidence type="ECO:0000255" key="2">
    <source>
        <dbReference type="PROSITE-ProRule" id="PRU01083"/>
    </source>
</evidence>
<dbReference type="EC" id="3.5.4.5" evidence="1"/>
<dbReference type="EMBL" id="CU928145">
    <property type="protein sequence ID" value="CAU98263.1"/>
    <property type="molecule type" value="Genomic_DNA"/>
</dbReference>
<dbReference type="RefSeq" id="WP_000553555.1">
    <property type="nucleotide sequence ID" value="NC_011748.1"/>
</dbReference>
<dbReference type="SMR" id="B7LA09"/>
<dbReference type="GeneID" id="93775039"/>
<dbReference type="KEGG" id="eck:EC55989_2393"/>
<dbReference type="HOGENOM" id="CLU_052424_0_0_6"/>
<dbReference type="Proteomes" id="UP000000746">
    <property type="component" value="Chromosome"/>
</dbReference>
<dbReference type="GO" id="GO:0005829">
    <property type="term" value="C:cytosol"/>
    <property type="evidence" value="ECO:0007669"/>
    <property type="project" value="TreeGrafter"/>
</dbReference>
<dbReference type="GO" id="GO:0004126">
    <property type="term" value="F:cytidine deaminase activity"/>
    <property type="evidence" value="ECO:0007669"/>
    <property type="project" value="UniProtKB-UniRule"/>
</dbReference>
<dbReference type="GO" id="GO:0042802">
    <property type="term" value="F:identical protein binding"/>
    <property type="evidence" value="ECO:0007669"/>
    <property type="project" value="UniProtKB-ARBA"/>
</dbReference>
<dbReference type="GO" id="GO:0008270">
    <property type="term" value="F:zinc ion binding"/>
    <property type="evidence" value="ECO:0007669"/>
    <property type="project" value="UniProtKB-UniRule"/>
</dbReference>
<dbReference type="GO" id="GO:0009972">
    <property type="term" value="P:cytidine deamination"/>
    <property type="evidence" value="ECO:0007669"/>
    <property type="project" value="InterPro"/>
</dbReference>
<dbReference type="CDD" id="cd01283">
    <property type="entry name" value="cytidine_deaminase"/>
    <property type="match status" value="2"/>
</dbReference>
<dbReference type="FunFam" id="3.40.140.10:FF:000006">
    <property type="entry name" value="Cytidine deaminase"/>
    <property type="match status" value="1"/>
</dbReference>
<dbReference type="FunFam" id="3.40.140.10:FF:000007">
    <property type="entry name" value="Cytidine deaminase"/>
    <property type="match status" value="1"/>
</dbReference>
<dbReference type="Gene3D" id="3.40.140.10">
    <property type="entry name" value="Cytidine Deaminase, domain 2"/>
    <property type="match status" value="2"/>
</dbReference>
<dbReference type="HAMAP" id="MF_01558">
    <property type="entry name" value="Cyt_deam"/>
    <property type="match status" value="1"/>
</dbReference>
<dbReference type="InterPro" id="IPR016192">
    <property type="entry name" value="APOBEC/CMP_deaminase_Zn-bd"/>
</dbReference>
<dbReference type="InterPro" id="IPR002125">
    <property type="entry name" value="CMP_dCMP_dom"/>
</dbReference>
<dbReference type="InterPro" id="IPR013171">
    <property type="entry name" value="Cyd/dCyd_deaminase_Zn-bd"/>
</dbReference>
<dbReference type="InterPro" id="IPR050202">
    <property type="entry name" value="Cyt/Deoxycyt_deaminase"/>
</dbReference>
<dbReference type="InterPro" id="IPR006263">
    <property type="entry name" value="Cyt_deam_dimer"/>
</dbReference>
<dbReference type="InterPro" id="IPR016193">
    <property type="entry name" value="Cytidine_deaminase-like"/>
</dbReference>
<dbReference type="InterPro" id="IPR020797">
    <property type="entry name" value="Cytidine_deaminase_bacteria"/>
</dbReference>
<dbReference type="NCBIfam" id="TIGR01355">
    <property type="entry name" value="cyt_deam_dimer"/>
    <property type="match status" value="1"/>
</dbReference>
<dbReference type="NCBIfam" id="NF006537">
    <property type="entry name" value="PRK09027.1"/>
    <property type="match status" value="1"/>
</dbReference>
<dbReference type="PANTHER" id="PTHR11644">
    <property type="entry name" value="CYTIDINE DEAMINASE"/>
    <property type="match status" value="1"/>
</dbReference>
<dbReference type="PANTHER" id="PTHR11644:SF2">
    <property type="entry name" value="CYTIDINE DEAMINASE"/>
    <property type="match status" value="1"/>
</dbReference>
<dbReference type="Pfam" id="PF00383">
    <property type="entry name" value="dCMP_cyt_deam_1"/>
    <property type="match status" value="1"/>
</dbReference>
<dbReference type="Pfam" id="PF08211">
    <property type="entry name" value="dCMP_cyt_deam_2"/>
    <property type="match status" value="1"/>
</dbReference>
<dbReference type="PIRSF" id="PIRSF006334">
    <property type="entry name" value="Cdd_plus_pseudo"/>
    <property type="match status" value="1"/>
</dbReference>
<dbReference type="SUPFAM" id="SSF53927">
    <property type="entry name" value="Cytidine deaminase-like"/>
    <property type="match status" value="2"/>
</dbReference>
<dbReference type="PROSITE" id="PS00903">
    <property type="entry name" value="CYT_DCMP_DEAMINASES_1"/>
    <property type="match status" value="1"/>
</dbReference>
<dbReference type="PROSITE" id="PS51747">
    <property type="entry name" value="CYT_DCMP_DEAMINASES_2"/>
    <property type="match status" value="2"/>
</dbReference>
<organism>
    <name type="scientific">Escherichia coli (strain 55989 / EAEC)</name>
    <dbReference type="NCBI Taxonomy" id="585055"/>
    <lineage>
        <taxon>Bacteria</taxon>
        <taxon>Pseudomonadati</taxon>
        <taxon>Pseudomonadota</taxon>
        <taxon>Gammaproteobacteria</taxon>
        <taxon>Enterobacterales</taxon>
        <taxon>Enterobacteriaceae</taxon>
        <taxon>Escherichia</taxon>
    </lineage>
</organism>
<keyword id="KW-0378">Hydrolase</keyword>
<keyword id="KW-0479">Metal-binding</keyword>
<keyword id="KW-1185">Reference proteome</keyword>
<keyword id="KW-0862">Zinc</keyword>
<reference key="1">
    <citation type="journal article" date="2009" name="PLoS Genet.">
        <title>Organised genome dynamics in the Escherichia coli species results in highly diverse adaptive paths.</title>
        <authorList>
            <person name="Touchon M."/>
            <person name="Hoede C."/>
            <person name="Tenaillon O."/>
            <person name="Barbe V."/>
            <person name="Baeriswyl S."/>
            <person name="Bidet P."/>
            <person name="Bingen E."/>
            <person name="Bonacorsi S."/>
            <person name="Bouchier C."/>
            <person name="Bouvet O."/>
            <person name="Calteau A."/>
            <person name="Chiapello H."/>
            <person name="Clermont O."/>
            <person name="Cruveiller S."/>
            <person name="Danchin A."/>
            <person name="Diard M."/>
            <person name="Dossat C."/>
            <person name="Karoui M.E."/>
            <person name="Frapy E."/>
            <person name="Garry L."/>
            <person name="Ghigo J.M."/>
            <person name="Gilles A.M."/>
            <person name="Johnson J."/>
            <person name="Le Bouguenec C."/>
            <person name="Lescat M."/>
            <person name="Mangenot S."/>
            <person name="Martinez-Jehanne V."/>
            <person name="Matic I."/>
            <person name="Nassif X."/>
            <person name="Oztas S."/>
            <person name="Petit M.A."/>
            <person name="Pichon C."/>
            <person name="Rouy Z."/>
            <person name="Ruf C.S."/>
            <person name="Schneider D."/>
            <person name="Tourret J."/>
            <person name="Vacherie B."/>
            <person name="Vallenet D."/>
            <person name="Medigue C."/>
            <person name="Rocha E.P.C."/>
            <person name="Denamur E."/>
        </authorList>
    </citation>
    <scope>NUCLEOTIDE SEQUENCE [LARGE SCALE GENOMIC DNA]</scope>
    <source>
        <strain>55989 / EAEC</strain>
    </source>
</reference>
<protein>
    <recommendedName>
        <fullName evidence="1">Cytidine deaminase</fullName>
        <ecNumber evidence="1">3.5.4.5</ecNumber>
    </recommendedName>
    <alternativeName>
        <fullName evidence="1">Cytidine aminohydrolase</fullName>
        <shortName evidence="1">CDA</shortName>
    </alternativeName>
</protein>
<feature type="chain" id="PRO_1000185415" description="Cytidine deaminase">
    <location>
        <begin position="1"/>
        <end position="294"/>
    </location>
</feature>
<feature type="domain" description="CMP/dCMP-type deaminase 1" evidence="2">
    <location>
        <begin position="48"/>
        <end position="168"/>
    </location>
</feature>
<feature type="domain" description="CMP/dCMP-type deaminase 2" evidence="2">
    <location>
        <begin position="186"/>
        <end position="294"/>
    </location>
</feature>
<feature type="active site" description="Proton donor" evidence="1">
    <location>
        <position position="104"/>
    </location>
</feature>
<feature type="binding site" evidence="1">
    <location>
        <begin position="89"/>
        <end position="91"/>
    </location>
    <ligand>
        <name>substrate</name>
    </ligand>
</feature>
<feature type="binding site" evidence="1">
    <location>
        <position position="102"/>
    </location>
    <ligand>
        <name>Zn(2+)</name>
        <dbReference type="ChEBI" id="CHEBI:29105"/>
        <note>catalytic</note>
    </ligand>
</feature>
<feature type="binding site" evidence="1">
    <location>
        <position position="129"/>
    </location>
    <ligand>
        <name>Zn(2+)</name>
        <dbReference type="ChEBI" id="CHEBI:29105"/>
        <note>catalytic</note>
    </ligand>
</feature>
<feature type="binding site" evidence="1">
    <location>
        <position position="132"/>
    </location>
    <ligand>
        <name>Zn(2+)</name>
        <dbReference type="ChEBI" id="CHEBI:29105"/>
        <note>catalytic</note>
    </ligand>
</feature>
<comment type="function">
    <text evidence="1">This enzyme scavenges exogenous and endogenous cytidine and 2'-deoxycytidine for UMP synthesis.</text>
</comment>
<comment type="catalytic activity">
    <reaction evidence="1">
        <text>cytidine + H2O + H(+) = uridine + NH4(+)</text>
        <dbReference type="Rhea" id="RHEA:16069"/>
        <dbReference type="ChEBI" id="CHEBI:15377"/>
        <dbReference type="ChEBI" id="CHEBI:15378"/>
        <dbReference type="ChEBI" id="CHEBI:16704"/>
        <dbReference type="ChEBI" id="CHEBI:17562"/>
        <dbReference type="ChEBI" id="CHEBI:28938"/>
        <dbReference type="EC" id="3.5.4.5"/>
    </reaction>
</comment>
<comment type="catalytic activity">
    <reaction evidence="1">
        <text>2'-deoxycytidine + H2O + H(+) = 2'-deoxyuridine + NH4(+)</text>
        <dbReference type="Rhea" id="RHEA:13433"/>
        <dbReference type="ChEBI" id="CHEBI:15377"/>
        <dbReference type="ChEBI" id="CHEBI:15378"/>
        <dbReference type="ChEBI" id="CHEBI:15698"/>
        <dbReference type="ChEBI" id="CHEBI:16450"/>
        <dbReference type="ChEBI" id="CHEBI:28938"/>
        <dbReference type="EC" id="3.5.4.5"/>
    </reaction>
</comment>
<comment type="cofactor">
    <cofactor evidence="1">
        <name>Zn(2+)</name>
        <dbReference type="ChEBI" id="CHEBI:29105"/>
    </cofactor>
    <text evidence="1">Binds 1 zinc ion.</text>
</comment>
<comment type="subunit">
    <text evidence="1">Homodimer.</text>
</comment>
<comment type="similarity">
    <text evidence="1">Belongs to the cytidine and deoxycytidylate deaminase family.</text>
</comment>
<proteinExistence type="inferred from homology"/>
<sequence length="294" mass="31540">MHPRFQTAFAQLADNLQSALEPILADKYFPALLTGEQVSSLKSATGLDEDALAFALLPLAAACARTPLSNFNVGAIARGVSGTWYFGANMEFIGATMQQTVHAEQSAISHAWLSGEKALAAITVNYTPCGHCRQFMNELNSGLDLRIHLPGREAHALRDYLPDAFGPKDLEIKTLLMDEQDHGYALTGDALSQAAIAAANRSHMPYSKSPSGVALECKDGRIFSGSYAENAAFNPTLPPLQGALILLNLKGYDYPDIQRAVLAEKADAPLIQWDATSATLKALGCHSIDRVLLA</sequence>
<accession>B7LA09</accession>
<name>CDD_ECO55</name>